<reference key="1">
    <citation type="submission" date="1996-12" db="EMBL/GenBank/DDBJ databases">
        <title>CTR9 is required for normal CLN1 and CLN2 G1 cyclin expression.</title>
        <authorList>
            <person name="Arndt K.T."/>
            <person name="Round E."/>
            <person name="Hoeppner D."/>
        </authorList>
    </citation>
    <scope>NUCLEOTIDE SEQUENCE [GENOMIC DNA]</scope>
    <source>
        <strain>ATCC 204508 / S288c</strain>
    </source>
</reference>
<reference key="2">
    <citation type="journal article" date="1996" name="Genetics">
        <title>CDP1, a novel Saccharomyces cerevisiae gene required for proper nuclear division and chromosome segregation.</title>
        <authorList>
            <person name="Foreman P.K."/>
            <person name="Davis R.W."/>
        </authorList>
    </citation>
    <scope>NUCLEOTIDE SEQUENCE [GENOMIC DNA]</scope>
    <scope>FUNCTION IN CHROMOSOME SEGREGATION</scope>
    <source>
        <strain>ATCC 200060 / W303</strain>
    </source>
</reference>
<reference key="3">
    <citation type="journal article" date="1995" name="Yeast">
        <title>DNA sequence analysis of a 13 kbp fragment of the left arm of yeast chromosome XV containing seven new open reading frames.</title>
        <authorList>
            <person name="Casamayor A."/>
            <person name="Aldea M."/>
            <person name="Casas C."/>
            <person name="Herrero E."/>
            <person name="Gamo F.-J."/>
            <person name="Lafuente M.J."/>
            <person name="Gancedo C."/>
            <person name="Arino J."/>
        </authorList>
    </citation>
    <scope>NUCLEOTIDE SEQUENCE [GENOMIC DNA]</scope>
    <source>
        <strain>ATCC 96604 / S288c / FY1679</strain>
    </source>
</reference>
<reference key="4">
    <citation type="journal article" date="1997" name="Nature">
        <title>The nucleotide sequence of Saccharomyces cerevisiae chromosome XV.</title>
        <authorList>
            <person name="Dujon B."/>
            <person name="Albermann K."/>
            <person name="Aldea M."/>
            <person name="Alexandraki D."/>
            <person name="Ansorge W."/>
            <person name="Arino J."/>
            <person name="Benes V."/>
            <person name="Bohn C."/>
            <person name="Bolotin-Fukuhara M."/>
            <person name="Bordonne R."/>
            <person name="Boyer J."/>
            <person name="Camasses A."/>
            <person name="Casamayor A."/>
            <person name="Casas C."/>
            <person name="Cheret G."/>
            <person name="Cziepluch C."/>
            <person name="Daignan-Fornier B."/>
            <person name="Dang V.-D."/>
            <person name="de Haan M."/>
            <person name="Delius H."/>
            <person name="Durand P."/>
            <person name="Fairhead C."/>
            <person name="Feldmann H."/>
            <person name="Gaillon L."/>
            <person name="Galisson F."/>
            <person name="Gamo F.-J."/>
            <person name="Gancedo C."/>
            <person name="Goffeau A."/>
            <person name="Goulding S.E."/>
            <person name="Grivell L.A."/>
            <person name="Habbig B."/>
            <person name="Hand N.J."/>
            <person name="Hani J."/>
            <person name="Hattenhorst U."/>
            <person name="Hebling U."/>
            <person name="Hernando Y."/>
            <person name="Herrero E."/>
            <person name="Heumann K."/>
            <person name="Hiesel R."/>
            <person name="Hilger F."/>
            <person name="Hofmann B."/>
            <person name="Hollenberg C.P."/>
            <person name="Hughes B."/>
            <person name="Jauniaux J.-C."/>
            <person name="Kalogeropoulos A."/>
            <person name="Katsoulou C."/>
            <person name="Kordes E."/>
            <person name="Lafuente M.J."/>
            <person name="Landt O."/>
            <person name="Louis E.J."/>
            <person name="Maarse A.C."/>
            <person name="Madania A."/>
            <person name="Mannhaupt G."/>
            <person name="Marck C."/>
            <person name="Martin R.P."/>
            <person name="Mewes H.-W."/>
            <person name="Michaux G."/>
            <person name="Paces V."/>
            <person name="Parle-McDermott A.G."/>
            <person name="Pearson B.M."/>
            <person name="Perrin A."/>
            <person name="Pettersson B."/>
            <person name="Poch O."/>
            <person name="Pohl T.M."/>
            <person name="Poirey R."/>
            <person name="Portetelle D."/>
            <person name="Pujol A."/>
            <person name="Purnelle B."/>
            <person name="Ramezani Rad M."/>
            <person name="Rechmann S."/>
            <person name="Schwager C."/>
            <person name="Schweizer M."/>
            <person name="Sor F."/>
            <person name="Sterky F."/>
            <person name="Tarassov I.A."/>
            <person name="Teodoru C."/>
            <person name="Tettelin H."/>
            <person name="Thierry A."/>
            <person name="Tobiasch E."/>
            <person name="Tzermia M."/>
            <person name="Uhlen M."/>
            <person name="Unseld M."/>
            <person name="Valens M."/>
            <person name="Vandenbol M."/>
            <person name="Vetter I."/>
            <person name="Vlcek C."/>
            <person name="Voet M."/>
            <person name="Volckaert G."/>
            <person name="Voss H."/>
            <person name="Wambutt R."/>
            <person name="Wedler H."/>
            <person name="Wiemann S."/>
            <person name="Winsor B."/>
            <person name="Wolfe K.H."/>
            <person name="Zollner A."/>
            <person name="Zumstein E."/>
            <person name="Kleine K."/>
        </authorList>
    </citation>
    <scope>NUCLEOTIDE SEQUENCE [LARGE SCALE GENOMIC DNA]</scope>
    <source>
        <strain>ATCC 204508 / S288c</strain>
    </source>
</reference>
<reference key="5">
    <citation type="journal article" date="2014" name="G3 (Bethesda)">
        <title>The reference genome sequence of Saccharomyces cerevisiae: Then and now.</title>
        <authorList>
            <person name="Engel S.R."/>
            <person name="Dietrich F.S."/>
            <person name="Fisk D.G."/>
            <person name="Binkley G."/>
            <person name="Balakrishnan R."/>
            <person name="Costanzo M.C."/>
            <person name="Dwight S.S."/>
            <person name="Hitz B.C."/>
            <person name="Karra K."/>
            <person name="Nash R.S."/>
            <person name="Weng S."/>
            <person name="Wong E.D."/>
            <person name="Lloyd P."/>
            <person name="Skrzypek M.S."/>
            <person name="Miyasato S.R."/>
            <person name="Simison M."/>
            <person name="Cherry J.M."/>
        </authorList>
    </citation>
    <scope>GENOME REANNOTATION</scope>
    <scope>SEQUENCE REVISION TO 197; 674; 768; 903; 907; 956-959 AND 987</scope>
    <source>
        <strain>ATCC 204508 / S288c</strain>
    </source>
</reference>
<reference key="6">
    <citation type="journal article" date="1999" name="Nucleic Acids Res.">
        <title>A role for Ctr9p and Paf1p in the regulation of G1 cyclin expression in yeast.</title>
        <authorList>
            <person name="Koch C."/>
            <person name="Wollmann P."/>
            <person name="Dahl M."/>
            <person name="Lottspeich F."/>
        </authorList>
    </citation>
    <scope>FUNCTION</scope>
    <scope>SUBUNIT</scope>
    <scope>SUBCELLULAR LOCATION</scope>
</reference>
<reference key="7">
    <citation type="journal article" date="2000" name="Nucleic Acids Res.">
        <title>The yeast CDP1 gene encodes a triple-helical DNA-binding protein.</title>
        <authorList>
            <person name="Musso M."/>
            <person name="Bianchi-Scarra G."/>
            <person name="Van Dyke M.W."/>
        </authorList>
    </citation>
    <scope>DNA-BINDING</scope>
</reference>
<reference key="8">
    <citation type="journal article" date="2002" name="Mol. Cell. Biol.">
        <title>Ctr9, Rtf1, and Leo1 are components of the Paf1/RNA polymerase II complex.</title>
        <authorList>
            <person name="Mueller C.L."/>
            <person name="Jaehning J.A."/>
        </authorList>
    </citation>
    <scope>IDENTIFICATION IN THE PAF1 COMPLEX</scope>
</reference>
<reference key="9">
    <citation type="journal article" date="2002" name="Mol. Cell. Biol.">
        <title>RNA polymerase II elongation factors of Saccharomyces cerevisiae: a targeted proteomics approach.</title>
        <authorList>
            <person name="Krogan N.J."/>
            <person name="Kim M."/>
            <person name="Ahn S.H."/>
            <person name="Zhong G."/>
            <person name="Kobor M.S."/>
            <person name="Cagney G."/>
            <person name="Emili A."/>
            <person name="Shilatifard A."/>
            <person name="Buratowski S."/>
            <person name="Greenblatt J.F."/>
        </authorList>
    </citation>
    <scope>INTERACTION WITH POB3 AND SPT16</scope>
</reference>
<reference key="10">
    <citation type="journal article" date="2003" name="Nature">
        <title>Global analysis of protein expression in yeast.</title>
        <authorList>
            <person name="Ghaemmaghami S."/>
            <person name="Huh W.-K."/>
            <person name="Bower K."/>
            <person name="Howson R.W."/>
            <person name="Belle A."/>
            <person name="Dephoure N."/>
            <person name="O'Shea E.K."/>
            <person name="Weissman J.S."/>
        </authorList>
    </citation>
    <scope>LEVEL OF PROTEIN EXPRESSION [LARGE SCALE ANALYSIS]</scope>
</reference>
<reference key="11">
    <citation type="journal article" date="2005" name="Eukaryot. Cell">
        <title>Separation of the Saccharomyces cerevisiae Paf1 complex from RNA polymerase II results in changes in its subnuclear localization.</title>
        <authorList>
            <person name="Porter S.E."/>
            <person name="Penheiter K.L."/>
            <person name="Jaehning J.A."/>
        </authorList>
    </citation>
    <scope>FUNCTION</scope>
    <scope>SUBCELLULAR LOCATION</scope>
</reference>
<reference key="12">
    <citation type="journal article" date="2005" name="J. Biol. Chem.">
        <title>Interaction between transcription elongation factors and mRNA 3'-end formation at the Saccharomyces cerevisiae GAL10-GAL7 locus.</title>
        <authorList>
            <person name="Kaplan C.D."/>
            <person name="Holland M.J."/>
            <person name="Winston F."/>
        </authorList>
    </citation>
    <scope>INTERACTION WITH SPT6</scope>
</reference>
<reference key="13">
    <citation type="journal article" date="2005" name="Mol. Cell">
        <title>A requirement for the Saccharomyces cerevisiae Paf1 complex in snoRNA 3' end formation.</title>
        <authorList>
            <person name="Sheldon K.E."/>
            <person name="Mauger D.M."/>
            <person name="Arndt K.M."/>
        </authorList>
    </citation>
    <scope>FUNCTION</scope>
</reference>
<reference key="14">
    <citation type="journal article" date="2007" name="J. Proteome Res.">
        <title>Large-scale phosphorylation analysis of alpha-factor-arrested Saccharomyces cerevisiae.</title>
        <authorList>
            <person name="Li X."/>
            <person name="Gerber S.A."/>
            <person name="Rudner A.D."/>
            <person name="Beausoleil S.A."/>
            <person name="Haas W."/>
            <person name="Villen J."/>
            <person name="Elias J.E."/>
            <person name="Gygi S.P."/>
        </authorList>
    </citation>
    <scope>PHOSPHORYLATION [LARGE SCALE ANALYSIS] AT SER-1015 AND SER-1017</scope>
    <scope>IDENTIFICATION BY MASS SPECTROMETRY [LARGE SCALE ANALYSIS]</scope>
    <source>
        <strain>ADR376</strain>
    </source>
</reference>
<reference key="15">
    <citation type="journal article" date="2007" name="Proc. Natl. Acad. Sci. U.S.A.">
        <title>Analysis of phosphorylation sites on proteins from Saccharomyces cerevisiae by electron transfer dissociation (ETD) mass spectrometry.</title>
        <authorList>
            <person name="Chi A."/>
            <person name="Huttenhower C."/>
            <person name="Geer L.Y."/>
            <person name="Coon J.J."/>
            <person name="Syka J.E.P."/>
            <person name="Bai D.L."/>
            <person name="Shabanowitz J."/>
            <person name="Burke D.J."/>
            <person name="Troyanskaya O.G."/>
            <person name="Hunt D.F."/>
        </authorList>
    </citation>
    <scope>PHOSPHORYLATION [LARGE SCALE ANALYSIS] AT SER-1017</scope>
    <scope>IDENTIFICATION BY MASS SPECTROMETRY [LARGE SCALE ANALYSIS]</scope>
</reference>
<reference key="16">
    <citation type="journal article" date="2008" name="Mol. Cell. Proteomics">
        <title>A multidimensional chromatography technology for in-depth phosphoproteome analysis.</title>
        <authorList>
            <person name="Albuquerque C.P."/>
            <person name="Smolka M.B."/>
            <person name="Payne S.H."/>
            <person name="Bafna V."/>
            <person name="Eng J."/>
            <person name="Zhou H."/>
        </authorList>
    </citation>
    <scope>PHOSPHORYLATION [LARGE SCALE ANALYSIS] AT SER-1015 AND SER-1017</scope>
    <scope>IDENTIFICATION BY MASS SPECTROMETRY [LARGE SCALE ANALYSIS]</scope>
</reference>
<reference key="17">
    <citation type="journal article" date="2009" name="Science">
        <title>Global analysis of Cdk1 substrate phosphorylation sites provides insights into evolution.</title>
        <authorList>
            <person name="Holt L.J."/>
            <person name="Tuch B.B."/>
            <person name="Villen J."/>
            <person name="Johnson A.D."/>
            <person name="Gygi S.P."/>
            <person name="Morgan D.O."/>
        </authorList>
    </citation>
    <scope>PHOSPHORYLATION [LARGE SCALE ANALYSIS] AT SER-1015 AND SER-1017</scope>
    <scope>IDENTIFICATION BY MASS SPECTROMETRY [LARGE SCALE ANALYSIS]</scope>
</reference>
<feature type="chain" id="PRO_0000106280" description="RNA polymerase-associated protein CTR9">
    <location>
        <begin position="1"/>
        <end position="1077"/>
    </location>
</feature>
<feature type="repeat" description="TPR 1">
    <location>
        <begin position="56"/>
        <end position="89"/>
    </location>
</feature>
<feature type="repeat" description="TPR 2">
    <location>
        <begin position="138"/>
        <end position="174"/>
    </location>
</feature>
<feature type="repeat" description="TPR 3">
    <location>
        <begin position="183"/>
        <end position="216"/>
    </location>
</feature>
<feature type="repeat" description="TPR 4">
    <location>
        <begin position="218"/>
        <end position="251"/>
    </location>
</feature>
<feature type="repeat" description="TPR 5">
    <location>
        <begin position="298"/>
        <end position="332"/>
    </location>
</feature>
<feature type="repeat" description="TPR 6">
    <location>
        <begin position="338"/>
        <end position="371"/>
    </location>
</feature>
<feature type="repeat" description="TPR 7">
    <location>
        <begin position="373"/>
        <end position="405"/>
    </location>
</feature>
<feature type="repeat" description="TPR 8">
    <location>
        <begin position="421"/>
        <end position="455"/>
    </location>
</feature>
<feature type="repeat" description="TPR 9">
    <location>
        <begin position="462"/>
        <end position="495"/>
    </location>
</feature>
<feature type="repeat" description="TPR 10">
    <location>
        <begin position="501"/>
        <end position="534"/>
    </location>
</feature>
<feature type="repeat" description="TPR 11">
    <location>
        <begin position="540"/>
        <end position="572"/>
    </location>
</feature>
<feature type="repeat" description="TPR 12">
    <location>
        <begin position="664"/>
        <end position="697"/>
    </location>
</feature>
<feature type="repeat" description="TPR 13">
    <location>
        <begin position="699"/>
        <end position="731"/>
    </location>
</feature>
<feature type="repeat" description="TPR 14">
    <location>
        <begin position="732"/>
        <end position="764"/>
    </location>
</feature>
<feature type="repeat" description="TPR 15">
    <location>
        <begin position="768"/>
        <end position="801"/>
    </location>
</feature>
<feature type="repeat" description="TPR 16">
    <location>
        <begin position="830"/>
        <end position="863"/>
    </location>
</feature>
<feature type="region of interest" description="Disordered" evidence="1">
    <location>
        <begin position="959"/>
        <end position="1077"/>
    </location>
</feature>
<feature type="compositionally biased region" description="Basic and acidic residues" evidence="1">
    <location>
        <begin position="959"/>
        <end position="980"/>
    </location>
</feature>
<feature type="compositionally biased region" description="Acidic residues" evidence="1">
    <location>
        <begin position="1042"/>
        <end position="1051"/>
    </location>
</feature>
<feature type="compositionally biased region" description="Acidic residues" evidence="1">
    <location>
        <begin position="1063"/>
        <end position="1077"/>
    </location>
</feature>
<feature type="modified residue" description="Phosphoserine" evidence="12 13 14">
    <location>
        <position position="1015"/>
    </location>
</feature>
<feature type="modified residue" description="Phosphoserine" evidence="11 12 13 14">
    <location>
        <position position="1017"/>
    </location>
</feature>
<feature type="sequence conflict" description="In Ref. 3; CAA88282 and 4; CAA99166." evidence="10" ref="3 4">
    <original>K</original>
    <variation>E</variation>
    <location>
        <position position="197"/>
    </location>
</feature>
<feature type="sequence conflict" description="In Ref. 2; AAB81882." evidence="10" ref="2">
    <original>I</original>
    <variation>V</variation>
    <location>
        <position position="461"/>
    </location>
</feature>
<feature type="sequence conflict" description="In Ref. 3; CAA88282 and 4; CAA99166." evidence="10" ref="3 4">
    <original>E</original>
    <variation>G</variation>
    <location>
        <position position="674"/>
    </location>
</feature>
<feature type="sequence conflict" description="In Ref. 3; CAA88282 and 4; CAA99166." evidence="10" ref="3 4">
    <original>R</original>
    <variation>T</variation>
    <location>
        <position position="786"/>
    </location>
</feature>
<feature type="sequence conflict" description="In Ref. 3; CAA88282 and 4; CAA99166." evidence="10" ref="3 4">
    <original>E</original>
    <variation>K</variation>
    <location>
        <position position="903"/>
    </location>
</feature>
<feature type="sequence conflict" description="In Ref. 3; CAA88282 and 4; CAA99166." evidence="10" ref="3 4">
    <original>S</original>
    <variation>R</variation>
    <location>
        <position position="907"/>
    </location>
</feature>
<feature type="sequence conflict" description="In Ref. 1; AAB38704 and 2; AAB81882." evidence="10" ref="1 2">
    <original>GW</original>
    <variation>ER</variation>
    <location>
        <begin position="926"/>
        <end position="927"/>
    </location>
</feature>
<feature type="sequence conflict" description="In Ref. 3; CAA88282 and 4; CAA99166." evidence="10" ref="3 4">
    <original>LIQE</original>
    <variation>IFQV</variation>
    <location>
        <begin position="956"/>
        <end position="959"/>
    </location>
</feature>
<feature type="sequence conflict" description="In Ref. 3; CAA88282 and 4; CAA99166." evidence="10" ref="3 4">
    <original>K</original>
    <variation>Q</variation>
    <location>
        <position position="987"/>
    </location>
</feature>
<feature type="sequence conflict" description="In Ref. 3; CAA88282." evidence="10" ref="3">
    <original>DSDEEEAQMSGSEQNKNDDNDENNDNDDNDGLF</original>
    <variation>R</variation>
    <location>
        <begin position="1045"/>
        <end position="1077"/>
    </location>
</feature>
<feature type="strand" evidence="15">
    <location>
        <begin position="17"/>
        <end position="22"/>
    </location>
</feature>
<feature type="strand" evidence="15">
    <location>
        <begin position="24"/>
        <end position="27"/>
    </location>
</feature>
<feature type="strand" evidence="15">
    <location>
        <begin position="29"/>
        <end position="33"/>
    </location>
</feature>
<feature type="turn" evidence="15">
    <location>
        <begin position="34"/>
        <end position="36"/>
    </location>
</feature>
<feature type="helix" evidence="15">
    <location>
        <begin position="43"/>
        <end position="51"/>
    </location>
</feature>
<feature type="helix" evidence="15">
    <location>
        <begin position="56"/>
        <end position="68"/>
    </location>
</feature>
<feature type="helix" evidence="15">
    <location>
        <begin position="72"/>
        <end position="82"/>
    </location>
</feature>
<feature type="turn" evidence="15">
    <location>
        <begin position="83"/>
        <end position="85"/>
    </location>
</feature>
<feature type="helix" evidence="15">
    <location>
        <begin position="88"/>
        <end position="91"/>
    </location>
</feature>
<feature type="helix" evidence="15">
    <location>
        <begin position="92"/>
        <end position="106"/>
    </location>
</feature>
<feature type="helix" evidence="15">
    <location>
        <begin position="113"/>
        <end position="133"/>
    </location>
</feature>
<feature type="helix" evidence="15">
    <location>
        <begin position="138"/>
        <end position="150"/>
    </location>
</feature>
<feature type="helix" evidence="15">
    <location>
        <begin position="154"/>
        <end position="174"/>
    </location>
</feature>
<feature type="helix" evidence="15">
    <location>
        <begin position="183"/>
        <end position="195"/>
    </location>
</feature>
<feature type="helix" evidence="15">
    <location>
        <begin position="199"/>
        <end position="212"/>
    </location>
</feature>
<feature type="helix" evidence="15">
    <location>
        <begin position="220"/>
        <end position="230"/>
    </location>
</feature>
<feature type="helix" evidence="15">
    <location>
        <begin position="234"/>
        <end position="247"/>
    </location>
</feature>
<feature type="helix" evidence="15">
    <location>
        <begin position="252"/>
        <end position="262"/>
    </location>
</feature>
<feature type="helix" evidence="15">
    <location>
        <begin position="284"/>
        <end position="287"/>
    </location>
</feature>
<feature type="turn" evidence="15">
    <location>
        <begin position="288"/>
        <end position="290"/>
    </location>
</feature>
<feature type="helix" evidence="15">
    <location>
        <begin position="291"/>
        <end position="294"/>
    </location>
</feature>
<feature type="helix" evidence="15">
    <location>
        <begin position="300"/>
        <end position="305"/>
    </location>
</feature>
<feature type="helix" evidence="16">
    <location>
        <begin position="314"/>
        <end position="323"/>
    </location>
</feature>
<feature type="helix" evidence="16">
    <location>
        <begin position="326"/>
        <end position="331"/>
    </location>
</feature>
<feature type="helix" evidence="16">
    <location>
        <begin position="334"/>
        <end position="350"/>
    </location>
</feature>
<feature type="helix" evidence="16">
    <location>
        <begin position="354"/>
        <end position="367"/>
    </location>
</feature>
<feature type="helix" evidence="16">
    <location>
        <begin position="372"/>
        <end position="384"/>
    </location>
</feature>
<feature type="helix" evidence="16">
    <location>
        <begin position="388"/>
        <end position="399"/>
    </location>
</feature>
<feature type="turn" evidence="16">
    <location>
        <begin position="400"/>
        <end position="404"/>
    </location>
</feature>
<feature type="helix" evidence="16">
    <location>
        <begin position="406"/>
        <end position="425"/>
    </location>
</feature>
<feature type="helix" evidence="16">
    <location>
        <begin position="431"/>
        <end position="454"/>
    </location>
</feature>
<feature type="strand" evidence="16">
    <location>
        <begin position="455"/>
        <end position="458"/>
    </location>
</feature>
<feature type="helix" evidence="16">
    <location>
        <begin position="462"/>
        <end position="474"/>
    </location>
</feature>
<feature type="helix" evidence="16">
    <location>
        <begin position="478"/>
        <end position="494"/>
    </location>
</feature>
<feature type="helix" evidence="16">
    <location>
        <begin position="501"/>
        <end position="514"/>
    </location>
</feature>
<feature type="helix" evidence="16">
    <location>
        <begin position="517"/>
        <end position="529"/>
    </location>
</feature>
<feature type="helix" evidence="16">
    <location>
        <begin position="537"/>
        <end position="549"/>
    </location>
</feature>
<feature type="turn" evidence="16">
    <location>
        <begin position="550"/>
        <end position="553"/>
    </location>
</feature>
<feature type="helix" evidence="16">
    <location>
        <begin position="555"/>
        <end position="568"/>
    </location>
</feature>
<feature type="helix" evidence="16">
    <location>
        <begin position="573"/>
        <end position="585"/>
    </location>
</feature>
<feature type="helix" evidence="16">
    <location>
        <begin position="591"/>
        <end position="602"/>
    </location>
</feature>
<feature type="helix" evidence="16">
    <location>
        <begin position="609"/>
        <end position="622"/>
    </location>
</feature>
<feature type="strand" evidence="16">
    <location>
        <begin position="623"/>
        <end position="626"/>
    </location>
</feature>
<feature type="helix" evidence="16">
    <location>
        <begin position="628"/>
        <end position="641"/>
    </location>
</feature>
<feature type="helix" evidence="16">
    <location>
        <begin position="647"/>
        <end position="665"/>
    </location>
</feature>
<feature type="helix" evidence="16">
    <location>
        <begin position="670"/>
        <end position="673"/>
    </location>
</feature>
<feature type="helix" evidence="16">
    <location>
        <begin position="675"/>
        <end position="693"/>
    </location>
</feature>
<feature type="helix" evidence="16">
    <location>
        <begin position="698"/>
        <end position="710"/>
    </location>
</feature>
<feature type="helix" evidence="16">
    <location>
        <begin position="714"/>
        <end position="725"/>
    </location>
</feature>
<feature type="helix" evidence="16">
    <location>
        <begin position="731"/>
        <end position="743"/>
    </location>
</feature>
<feature type="helix" evidence="16">
    <location>
        <begin position="747"/>
        <end position="759"/>
    </location>
</feature>
<feature type="turn" evidence="16">
    <location>
        <begin position="764"/>
        <end position="766"/>
    </location>
</feature>
<feature type="helix" evidence="16">
    <location>
        <begin position="767"/>
        <end position="783"/>
    </location>
</feature>
<feature type="helix" evidence="16">
    <location>
        <begin position="788"/>
        <end position="808"/>
    </location>
</feature>
<feature type="helix" evidence="16">
    <location>
        <begin position="812"/>
        <end position="834"/>
    </location>
</feature>
<feature type="helix" evidence="16">
    <location>
        <begin position="838"/>
        <end position="840"/>
    </location>
</feature>
<feature type="helix" evidence="16">
    <location>
        <begin position="843"/>
        <end position="864"/>
    </location>
</feature>
<feature type="helix" evidence="16">
    <location>
        <begin position="876"/>
        <end position="884"/>
    </location>
</feature>
<feature type="helix" evidence="16">
    <location>
        <begin position="887"/>
        <end position="919"/>
    </location>
</feature>
<dbReference type="EMBL" id="U69264">
    <property type="protein sequence ID" value="AAB38704.1"/>
    <property type="molecule type" value="Genomic_DNA"/>
</dbReference>
<dbReference type="EMBL" id="U31217">
    <property type="protein sequence ID" value="AAB81882.1"/>
    <property type="molecule type" value="Genomic_DNA"/>
</dbReference>
<dbReference type="EMBL" id="Z48239">
    <property type="protein sequence ID" value="CAA88282.1"/>
    <property type="molecule type" value="Genomic_DNA"/>
</dbReference>
<dbReference type="EMBL" id="Z74887">
    <property type="protein sequence ID" value="CAA99166.1"/>
    <property type="molecule type" value="Genomic_DNA"/>
</dbReference>
<dbReference type="EMBL" id="BK006948">
    <property type="protein sequence ID" value="DAA10640.2"/>
    <property type="molecule type" value="Genomic_DNA"/>
</dbReference>
<dbReference type="PIR" id="S66842">
    <property type="entry name" value="S66842"/>
</dbReference>
<dbReference type="RefSeq" id="NP_014496.2">
    <property type="nucleotide sequence ID" value="NM_001183399.2"/>
</dbReference>
<dbReference type="PDB" id="5ZYP">
    <property type="method" value="X-ray"/>
    <property type="resolution" value="2.53 A"/>
    <property type="chains" value="A=1-313"/>
</dbReference>
<dbReference type="PDB" id="7DKH">
    <property type="method" value="X-ray"/>
    <property type="resolution" value="2.90 A"/>
    <property type="chains" value="A/E/I=1-972"/>
</dbReference>
<dbReference type="PDBsum" id="5ZYP"/>
<dbReference type="PDBsum" id="7DKH"/>
<dbReference type="SMR" id="P89105"/>
<dbReference type="BioGRID" id="34272">
    <property type="interactions" value="237"/>
</dbReference>
<dbReference type="ComplexPortal" id="CPX-1726">
    <property type="entry name" value="PAF1 complex"/>
</dbReference>
<dbReference type="DIP" id="DIP-2814N"/>
<dbReference type="FunCoup" id="P89105">
    <property type="interactions" value="1144"/>
</dbReference>
<dbReference type="IntAct" id="P89105">
    <property type="interactions" value="43"/>
</dbReference>
<dbReference type="MINT" id="P89105"/>
<dbReference type="STRING" id="4932.YOL145C"/>
<dbReference type="CarbonylDB" id="P89105"/>
<dbReference type="iPTMnet" id="P89105"/>
<dbReference type="PaxDb" id="4932-YOL145C"/>
<dbReference type="PeptideAtlas" id="P89105"/>
<dbReference type="EnsemblFungi" id="YOL145C_mRNA">
    <property type="protein sequence ID" value="YOL145C"/>
    <property type="gene ID" value="YOL145C"/>
</dbReference>
<dbReference type="GeneID" id="854020"/>
<dbReference type="KEGG" id="sce:YOL145C"/>
<dbReference type="AGR" id="SGD:S000005505"/>
<dbReference type="SGD" id="S000005505">
    <property type="gene designation" value="CTR9"/>
</dbReference>
<dbReference type="VEuPathDB" id="FungiDB:YOL145C"/>
<dbReference type="eggNOG" id="KOG2002">
    <property type="taxonomic scope" value="Eukaryota"/>
</dbReference>
<dbReference type="GeneTree" id="ENSGT00390000005097"/>
<dbReference type="HOGENOM" id="CLU_003008_0_1_1"/>
<dbReference type="InParanoid" id="P89105"/>
<dbReference type="OMA" id="EHWLTIA"/>
<dbReference type="OrthoDB" id="343875at2759"/>
<dbReference type="BioCyc" id="YEAST:G3O-33535-MONOMER"/>
<dbReference type="BioGRID-ORCS" id="854020">
    <property type="hits" value="1 hit in 10 CRISPR screens"/>
</dbReference>
<dbReference type="PRO" id="PR:P89105"/>
<dbReference type="Proteomes" id="UP000002311">
    <property type="component" value="Chromosome XV"/>
</dbReference>
<dbReference type="RNAct" id="P89105">
    <property type="molecule type" value="protein"/>
</dbReference>
<dbReference type="GO" id="GO:0016593">
    <property type="term" value="C:Cdc73/Paf1 complex"/>
    <property type="evidence" value="ECO:0000353"/>
    <property type="project" value="SGD"/>
</dbReference>
<dbReference type="GO" id="GO:0000791">
    <property type="term" value="C:euchromatin"/>
    <property type="evidence" value="ECO:0000314"/>
    <property type="project" value="SGD"/>
</dbReference>
<dbReference type="GO" id="GO:0005634">
    <property type="term" value="C:nucleus"/>
    <property type="evidence" value="ECO:0000314"/>
    <property type="project" value="SGD"/>
</dbReference>
<dbReference type="GO" id="GO:1990269">
    <property type="term" value="F:RNA polymerase II C-terminal domain phosphoserine binding"/>
    <property type="evidence" value="ECO:0000314"/>
    <property type="project" value="SGD"/>
</dbReference>
<dbReference type="GO" id="GO:0000993">
    <property type="term" value="F:RNA polymerase II complex binding"/>
    <property type="evidence" value="ECO:0000353"/>
    <property type="project" value="SGD"/>
</dbReference>
<dbReference type="GO" id="GO:0061629">
    <property type="term" value="F:RNA polymerase II-specific DNA-binding transcription factor binding"/>
    <property type="evidence" value="ECO:0000353"/>
    <property type="project" value="SGD"/>
</dbReference>
<dbReference type="GO" id="GO:0003712">
    <property type="term" value="F:transcription coregulator activity"/>
    <property type="evidence" value="ECO:0000353"/>
    <property type="project" value="SGD"/>
</dbReference>
<dbReference type="GO" id="GO:0045142">
    <property type="term" value="F:triplex DNA binding"/>
    <property type="evidence" value="ECO:0000314"/>
    <property type="project" value="SGD"/>
</dbReference>
<dbReference type="GO" id="GO:0006353">
    <property type="term" value="P:DNA-templated transcription termination"/>
    <property type="evidence" value="ECO:0000315"/>
    <property type="project" value="SGD"/>
</dbReference>
<dbReference type="GO" id="GO:0000082">
    <property type="term" value="P:G1/S transition of mitotic cell cycle"/>
    <property type="evidence" value="ECO:0000315"/>
    <property type="project" value="SGD"/>
</dbReference>
<dbReference type="GO" id="GO:0031124">
    <property type="term" value="P:mRNA 3'-end processing"/>
    <property type="evidence" value="ECO:0000315"/>
    <property type="project" value="SGD"/>
</dbReference>
<dbReference type="GO" id="GO:1901525">
    <property type="term" value="P:negative regulation of mitophagy"/>
    <property type="evidence" value="ECO:0000315"/>
    <property type="project" value="SGD"/>
</dbReference>
<dbReference type="GO" id="GO:2001209">
    <property type="term" value="P:positive regulation of transcription elongation by RNA polymerase I"/>
    <property type="evidence" value="ECO:0000314"/>
    <property type="project" value="SGD"/>
</dbReference>
<dbReference type="GO" id="GO:0006357">
    <property type="term" value="P:regulation of transcription by RNA polymerase II"/>
    <property type="evidence" value="ECO:0000315"/>
    <property type="project" value="SGD"/>
</dbReference>
<dbReference type="GO" id="GO:0060260">
    <property type="term" value="P:regulation of transcription initiation by RNA polymerase II"/>
    <property type="evidence" value="ECO:0000315"/>
    <property type="project" value="SGD"/>
</dbReference>
<dbReference type="GO" id="GO:0090262">
    <property type="term" value="P:regulation of transcription-coupled nucleotide-excision repair"/>
    <property type="evidence" value="ECO:0000316"/>
    <property type="project" value="SGD"/>
</dbReference>
<dbReference type="GO" id="GO:0031126">
    <property type="term" value="P:sno(s)RNA 3'-end processing"/>
    <property type="evidence" value="ECO:0000315"/>
    <property type="project" value="SGD"/>
</dbReference>
<dbReference type="GO" id="GO:0009302">
    <property type="term" value="P:sno(s)RNA transcription"/>
    <property type="evidence" value="ECO:0000315"/>
    <property type="project" value="SGD"/>
</dbReference>
<dbReference type="GO" id="GO:0001015">
    <property type="term" value="P:snoRNA transcription by RNA polymerase II"/>
    <property type="evidence" value="ECO:0000315"/>
    <property type="project" value="SGD"/>
</dbReference>
<dbReference type="GO" id="GO:0006360">
    <property type="term" value="P:transcription by RNA polymerase I"/>
    <property type="evidence" value="ECO:0000316"/>
    <property type="project" value="SGD"/>
</dbReference>
<dbReference type="GO" id="GO:0006362">
    <property type="term" value="P:transcription elongation by RNA polymerase I"/>
    <property type="evidence" value="ECO:0000315"/>
    <property type="project" value="SGD"/>
</dbReference>
<dbReference type="GO" id="GO:0006368">
    <property type="term" value="P:transcription elongation by RNA polymerase II"/>
    <property type="evidence" value="ECO:0000316"/>
    <property type="project" value="SGD"/>
</dbReference>
<dbReference type="FunFam" id="1.25.40.10:FF:001312">
    <property type="entry name" value="RNA polymerase-associated protein CTR9"/>
    <property type="match status" value="1"/>
</dbReference>
<dbReference type="FunFam" id="1.25.40.10:FF:001471">
    <property type="entry name" value="RNA polymerase-associated protein CTR9"/>
    <property type="match status" value="1"/>
</dbReference>
<dbReference type="Gene3D" id="1.25.40.10">
    <property type="entry name" value="Tetratricopeptide repeat domain"/>
    <property type="match status" value="4"/>
</dbReference>
<dbReference type="InterPro" id="IPR031101">
    <property type="entry name" value="Ctr9"/>
</dbReference>
<dbReference type="InterPro" id="IPR011990">
    <property type="entry name" value="TPR-like_helical_dom_sf"/>
</dbReference>
<dbReference type="InterPro" id="IPR019734">
    <property type="entry name" value="TPR_rpt"/>
</dbReference>
<dbReference type="PANTHER" id="PTHR14027">
    <property type="entry name" value="RNA POLYMERASE-ASSOCIATED PROTEIN CTR9"/>
    <property type="match status" value="1"/>
</dbReference>
<dbReference type="PANTHER" id="PTHR14027:SF2">
    <property type="entry name" value="RNA POLYMERASE-ASSOCIATED PROTEIN CTR9 HOMOLOG"/>
    <property type="match status" value="1"/>
</dbReference>
<dbReference type="Pfam" id="PF13181">
    <property type="entry name" value="TPR_8"/>
    <property type="match status" value="2"/>
</dbReference>
<dbReference type="SMART" id="SM00028">
    <property type="entry name" value="TPR"/>
    <property type="match status" value="8"/>
</dbReference>
<dbReference type="SUPFAM" id="SSF81901">
    <property type="entry name" value="HCP-like"/>
    <property type="match status" value="1"/>
</dbReference>
<dbReference type="SUPFAM" id="SSF48452">
    <property type="entry name" value="TPR-like"/>
    <property type="match status" value="3"/>
</dbReference>
<dbReference type="PROSITE" id="PS50005">
    <property type="entry name" value="TPR"/>
    <property type="match status" value="8"/>
</dbReference>
<dbReference type="PROSITE" id="PS50293">
    <property type="entry name" value="TPR_REGION"/>
    <property type="match status" value="6"/>
</dbReference>
<name>CTR9_YEAST</name>
<protein>
    <recommendedName>
        <fullName>RNA polymerase-associated protein CTR9</fullName>
    </recommendedName>
    <alternativeName>
        <fullName>Centromere-binding factor 1-dependent protein 1</fullName>
    </alternativeName>
    <alternativeName>
        <fullName>Cln three-requiring protein 9</fullName>
    </alternativeName>
</protein>
<evidence type="ECO:0000256" key="1">
    <source>
        <dbReference type="SAM" id="MobiDB-lite"/>
    </source>
</evidence>
<evidence type="ECO:0000269" key="2">
    <source>
    </source>
</evidence>
<evidence type="ECO:0000269" key="3">
    <source>
    </source>
</evidence>
<evidence type="ECO:0000269" key="4">
    <source>
    </source>
</evidence>
<evidence type="ECO:0000269" key="5">
    <source>
    </source>
</evidence>
<evidence type="ECO:0000269" key="6">
    <source>
    </source>
</evidence>
<evidence type="ECO:0000269" key="7">
    <source>
    </source>
</evidence>
<evidence type="ECO:0000269" key="8">
    <source>
    </source>
</evidence>
<evidence type="ECO:0000269" key="9">
    <source>
    </source>
</evidence>
<evidence type="ECO:0000305" key="10"/>
<evidence type="ECO:0007744" key="11">
    <source>
    </source>
</evidence>
<evidence type="ECO:0007744" key="12">
    <source>
    </source>
</evidence>
<evidence type="ECO:0007744" key="13">
    <source>
    </source>
</evidence>
<evidence type="ECO:0007744" key="14">
    <source>
    </source>
</evidence>
<evidence type="ECO:0007829" key="15">
    <source>
        <dbReference type="PDB" id="5ZYP"/>
    </source>
</evidence>
<evidence type="ECO:0007829" key="16">
    <source>
        <dbReference type="PDB" id="7DKH"/>
    </source>
</evidence>
<keyword id="KW-0002">3D-structure</keyword>
<keyword id="KW-0010">Activator</keyword>
<keyword id="KW-0238">DNA-binding</keyword>
<keyword id="KW-0539">Nucleus</keyword>
<keyword id="KW-0597">Phosphoprotein</keyword>
<keyword id="KW-1185">Reference proteome</keyword>
<keyword id="KW-0677">Repeat</keyword>
<keyword id="KW-0802">TPR repeat</keyword>
<keyword id="KW-0804">Transcription</keyword>
<keyword id="KW-0805">Transcription regulation</keyword>
<accession>P89105</accession>
<accession>D6W1S4</accession>
<accession>O14409</accession>
<accession>Q07332</accession>
<accession>Q08292</accession>
<proteinExistence type="evidence at protein level"/>
<organism>
    <name type="scientific">Saccharomyces cerevisiae (strain ATCC 204508 / S288c)</name>
    <name type="common">Baker's yeast</name>
    <dbReference type="NCBI Taxonomy" id="559292"/>
    <lineage>
        <taxon>Eukaryota</taxon>
        <taxon>Fungi</taxon>
        <taxon>Dikarya</taxon>
        <taxon>Ascomycota</taxon>
        <taxon>Saccharomycotina</taxon>
        <taxon>Saccharomycetes</taxon>
        <taxon>Saccharomycetales</taxon>
        <taxon>Saccharomycetaceae</taxon>
        <taxon>Saccharomyces</taxon>
    </lineage>
</organism>
<sequence>MTNAMKVEGYPSMEWPTSLDIPLKASEELVGIDLETDLPDDPTDLKTLLVEENSEKEHWLTIALAYCNHGKTNEGIKLIEMALDVFQNSERASLHTFLTWAHLNLAKGQSLSVETKEHELTQAELNLKDAIGFDPTWIGNMLATVELYYQRGHYDKALETSDLFVKSIHAEDHRSGRQSKPNCLFLLLRAKLLYQKKNYMASLKIFQELLVINPVLQPDPRIGIGLCFWQLKDSKMAIKSWQRALQLNPKNTSASILVLLGEFRESFTNSTNDKTFKEAFTKALSDLNNIFSENQHNPVLLTLLQTYYYFKGDYQTVLDIYHHRILKMSPMIAKIVLSESSFWCGRAHYALGDYRKSFIMFQESLKKNEDNLLAKLGLGQTQIKNNLLEESIITFENLYKTNESLQELNYILGMLYAGKAFDAKTAKNTSAKEQSNLNEKALKYLERYLKLTLATKNQLVISRAYLVISQLYELQNQYKTSLDYLSKALEEMEFIKKEIPLEVLNNLACYHFINGDFIKADDLFKQAKAKVSDKDESVNITLEYNIARTNEKNDCEKSESIYSQVTSLHPAYIAARIRNLYLKFAQSKIEDSDMSTEMNKLLDLNKSDLEIRSFYGWYLKNSKERKNNEKSTTHNKETLVKYNSHDAYALISLANLYVTIARDGKKSRNPKEQEKSKHSYLKAIQLYQKVLQVDPFNIFAAQGLAIIFAESKRLGPALEILRKVRDSLDNEDVQLNLAHCYLEMREYGKAIENYELVLKKFDNEKTRPHILNLLGRAWYARAIKERSVNFYQKALENAKTALDLFVKESSKSKFIHSVKFNIALLHFQIAETLRRSNPKFRTVQQIKDSLEGLKEGLELFRELNDLKEFNMIPKEELEQRIQLGETTMKSALERSLNEQEEFEKEQSAKIDEARKILEENELKEQGWMKQEEEARRLKLEKQAEEYRKLQDEAQKLIQEREAMAISEHNVKDDSDLSDKDNEYDEEKPRQKRKRSTKTKNSGESKRRKAAKKTLSDSDEDDDDVVKKPSHNKGKKSQLSNEFIEDSDEEEAQMSGSEQNKNDDNDENNDNDDNDGLF</sequence>
<comment type="function">
    <text evidence="2 7 8 9">The PAF1 complex is a multifunctional complex. Involved in transcription initiation via genetic interactions with TATA-binding proteins. Involved in elongation. It regulates 3'-end formation of snR47 by modulating the recruitment or stable association of NRD1 and NAB3 with RNA polymerase II. Also has a role in transcription-coupled histone modification. Required for activation of RAD6 ubiquitin conjugate and the BRE1 ubiquitin ligase which ubiquitinate 'Lys-126' histone H2B. Activates the SET1 histone methyltransferase complex for methylation of 'Lys-4' of histone H3 and for methylation of 'Lys-73' of histone H3 by DOT1 and 'Lys-36' of histone H3 by SET2. In complex with PAF1, required for normal CLN1 and CLN2 G1 cyclin expression in late G1. Also has a role in chromosome segregation where it appears to be involved in microtubule placement.</text>
</comment>
<comment type="subunit">
    <text evidence="2 3 4 6">Component of the PAF1 complex which consists of at least CDC73, CTR9, LEO1, PAF1 and RTF1. Interacts with SPT6. Interacts with FACT subunits POB3 and SPT16.</text>
</comment>
<comment type="interaction">
    <interactant intactId="EBI-5283">
        <id>P89105</id>
    </interactant>
    <interactant intactId="EBI-10108">
        <id>P38439</id>
        <label>LEO1</label>
    </interactant>
    <organismsDiffer>false</organismsDiffer>
    <experiments>6</experiments>
</comment>
<comment type="interaction">
    <interactant intactId="EBI-5283">
        <id>P89105</id>
    </interactant>
    <interactant intactId="EBI-12855">
        <id>P38351</id>
        <label>PAF1</label>
    </interactant>
    <organismsDiffer>false</organismsDiffer>
    <experiments>6</experiments>
</comment>
<comment type="interaction">
    <interactant intactId="EBI-5283">
        <id>P89105</id>
    </interactant>
    <interactant intactId="EBI-15760">
        <id>P04050</id>
        <label>RPO21</label>
    </interactant>
    <organismsDiffer>false</organismsDiffer>
    <experiments>4</experiments>
</comment>
<comment type="interaction">
    <interactant intactId="EBI-5283">
        <id>P89105</id>
    </interactant>
    <interactant intactId="EBI-16303">
        <id>P53064</id>
        <label>RTF1</label>
    </interactant>
    <organismsDiffer>false</organismsDiffer>
    <experiments>9</experiments>
</comment>
<comment type="interaction">
    <interactant intactId="EBI-5283">
        <id>P89105</id>
    </interactant>
    <interactant intactId="EBI-17372">
        <id>Q00772</id>
        <label>SLT2</label>
    </interactant>
    <organismsDiffer>false</organismsDiffer>
    <experiments>2</experiments>
</comment>
<comment type="interaction">
    <interactant intactId="EBI-5283">
        <id>P89105</id>
    </interactant>
    <interactant intactId="EBI-17937">
        <id>P27692</id>
        <label>SPT5</label>
    </interactant>
    <organismsDiffer>false</organismsDiffer>
    <experiments>2</experiments>
</comment>
<comment type="subcellular location">
    <subcellularLocation>
        <location evidence="2 7">Nucleus</location>
        <location evidence="2 7">Nucleoplasm</location>
    </subcellularLocation>
</comment>
<comment type="miscellaneous">
    <text evidence="5">Present with 12900 molecules/cell in log phase SD medium.</text>
</comment>
<gene>
    <name type="primary">CTR9</name>
    <name type="synonym">CDP1</name>
    <name type="ordered locus">YOL145C</name>
</gene>